<comment type="function">
    <text evidence="1">Acts as one of several non-catalytic accessory components of the cytoplasmic dynein 1 complex that are thought to be involved in linking dynein to cargos and to adapter proteins that regulate dynein function. Cytoplasmic dynein 1 acts as a motor for the intracellular retrograde motility of vesicles and organelles along microtubules (By similarity).</text>
</comment>
<comment type="subunit">
    <text evidence="1 3">Homodimer (Probable). The cytoplasmic dynein 1 complex consists of two catalytic heavy chains (HCs) and a number of non-catalytic subunits presented by intermediate chains (ICs), light intermediate chains (LICs) and light chains (LCs); the composition seems to vary in respect to the IC, LIC and LC composition. The heavy chain homodimer serves as a scaffold for the probable homodimeric assembly of the respective non-catalytic subunits. The ICs and LICs bind directly to the HC dimer and the LCs assemble on the IC dimer. Interacts with DYNC1I1 and DYNC1I2. Self-associates. Interacts with DYNLRB1 (By similarity).</text>
</comment>
<comment type="subcellular location">
    <subcellularLocation>
        <location evidence="1">Cytoplasm</location>
        <location evidence="1">Cytoskeleton</location>
    </subcellularLocation>
</comment>
<comment type="similarity">
    <text evidence="3">Belongs to the GAMAD family.</text>
</comment>
<dbReference type="EMBL" id="BC108217">
    <property type="protein sequence ID" value="AAI08218.1"/>
    <property type="molecule type" value="mRNA"/>
</dbReference>
<dbReference type="RefSeq" id="NP_001070587.1">
    <property type="nucleotide sequence ID" value="NM_001077119.2"/>
</dbReference>
<dbReference type="EMDB" id="EMD-50664"/>
<dbReference type="SMR" id="Q32P85"/>
<dbReference type="FunCoup" id="Q32P85">
    <property type="interactions" value="187"/>
</dbReference>
<dbReference type="STRING" id="9913.ENSBTAP00000072894"/>
<dbReference type="PaxDb" id="9913-ENSBTAP00000023603"/>
<dbReference type="GeneID" id="768062"/>
<dbReference type="KEGG" id="bta:768062"/>
<dbReference type="CTD" id="83657"/>
<dbReference type="VEuPathDB" id="HostDB:ENSBTAG00000017752"/>
<dbReference type="eggNOG" id="KOG4115">
    <property type="taxonomic scope" value="Eukaryota"/>
</dbReference>
<dbReference type="HOGENOM" id="CLU_113002_3_2_1"/>
<dbReference type="InParanoid" id="Q32P85"/>
<dbReference type="OMA" id="NEIMCAP"/>
<dbReference type="OrthoDB" id="9985637at2759"/>
<dbReference type="TreeFam" id="TF315165"/>
<dbReference type="Reactome" id="R-BTA-5620924">
    <property type="pathway name" value="Intraflagellar transport"/>
</dbReference>
<dbReference type="Proteomes" id="UP000009136">
    <property type="component" value="Chromosome 18"/>
</dbReference>
<dbReference type="Bgee" id="ENSBTAG00000017752">
    <property type="expression patterns" value="Expressed in semen and 106 other cell types or tissues"/>
</dbReference>
<dbReference type="GO" id="GO:0005813">
    <property type="term" value="C:centrosome"/>
    <property type="evidence" value="ECO:0000318"/>
    <property type="project" value="GO_Central"/>
</dbReference>
<dbReference type="GO" id="GO:0005737">
    <property type="term" value="C:cytoplasm"/>
    <property type="evidence" value="ECO:0000318"/>
    <property type="project" value="GO_Central"/>
</dbReference>
<dbReference type="GO" id="GO:0005868">
    <property type="term" value="C:cytoplasmic dynein complex"/>
    <property type="evidence" value="ECO:0000250"/>
    <property type="project" value="UniProtKB"/>
</dbReference>
<dbReference type="GO" id="GO:0005874">
    <property type="term" value="C:microtubule"/>
    <property type="evidence" value="ECO:0007669"/>
    <property type="project" value="UniProtKB-KW"/>
</dbReference>
<dbReference type="GO" id="GO:0045505">
    <property type="term" value="F:dynein intermediate chain binding"/>
    <property type="evidence" value="ECO:0000318"/>
    <property type="project" value="GO_Central"/>
</dbReference>
<dbReference type="GO" id="GO:0007018">
    <property type="term" value="P:microtubule-based movement"/>
    <property type="evidence" value="ECO:0000318"/>
    <property type="project" value="GO_Central"/>
</dbReference>
<dbReference type="FunFam" id="3.30.450.30:FF:000002">
    <property type="entry name" value="Dynein light chain roadblock"/>
    <property type="match status" value="1"/>
</dbReference>
<dbReference type="Gene3D" id="3.30.450.30">
    <property type="entry name" value="Dynein light chain 2a, cytoplasmic"/>
    <property type="match status" value="1"/>
</dbReference>
<dbReference type="InterPro" id="IPR016561">
    <property type="entry name" value="DYNLRB1/2"/>
</dbReference>
<dbReference type="InterPro" id="IPR004942">
    <property type="entry name" value="Roadblock/LAMTOR2_dom"/>
</dbReference>
<dbReference type="PANTHER" id="PTHR10779">
    <property type="entry name" value="DYNEIN LIGHT CHAIN ROADBLOCK"/>
    <property type="match status" value="1"/>
</dbReference>
<dbReference type="Pfam" id="PF03259">
    <property type="entry name" value="Robl_LC7"/>
    <property type="match status" value="1"/>
</dbReference>
<dbReference type="PIRSF" id="PIRSF009998">
    <property type="entry name" value="DLC7"/>
    <property type="match status" value="1"/>
</dbReference>
<dbReference type="SMART" id="SM00960">
    <property type="entry name" value="Robl_LC7"/>
    <property type="match status" value="1"/>
</dbReference>
<dbReference type="SUPFAM" id="SSF103196">
    <property type="entry name" value="Roadblock/LC7 domain"/>
    <property type="match status" value="1"/>
</dbReference>
<reference key="1">
    <citation type="submission" date="2005-10" db="EMBL/GenBank/DDBJ databases">
        <authorList>
            <consortium name="NIH - Mammalian Gene Collection (MGC) project"/>
        </authorList>
    </citation>
    <scope>NUCLEOTIDE SEQUENCE [LARGE SCALE MRNA]</scope>
    <source>
        <strain>Crossbred X Angus</strain>
        <tissue>Liver</tissue>
    </source>
</reference>
<evidence type="ECO:0000250" key="1"/>
<evidence type="ECO:0000250" key="2">
    <source>
        <dbReference type="UniProtKB" id="Q8TF09"/>
    </source>
</evidence>
<evidence type="ECO:0000305" key="3"/>
<sequence>MAEVEETLKRIQSHKGVIGTMVVNAEGIPIRTTLDNSTTVQYAGLLHQLTMKAKSTVRDIDPQNDLTFLRIRSKKHEIMVAPDKEYLLIVIQNPCE</sequence>
<accession>Q32P85</accession>
<keyword id="KW-0007">Acetylation</keyword>
<keyword id="KW-0963">Cytoplasm</keyword>
<keyword id="KW-0206">Cytoskeleton</keyword>
<keyword id="KW-0243">Dynein</keyword>
<keyword id="KW-0493">Microtubule</keyword>
<keyword id="KW-0505">Motor protein</keyword>
<keyword id="KW-1185">Reference proteome</keyword>
<keyword id="KW-0813">Transport</keyword>
<organism>
    <name type="scientific">Bos taurus</name>
    <name type="common">Bovine</name>
    <dbReference type="NCBI Taxonomy" id="9913"/>
    <lineage>
        <taxon>Eukaryota</taxon>
        <taxon>Metazoa</taxon>
        <taxon>Chordata</taxon>
        <taxon>Craniata</taxon>
        <taxon>Vertebrata</taxon>
        <taxon>Euteleostomi</taxon>
        <taxon>Mammalia</taxon>
        <taxon>Eutheria</taxon>
        <taxon>Laurasiatheria</taxon>
        <taxon>Artiodactyla</taxon>
        <taxon>Ruminantia</taxon>
        <taxon>Pecora</taxon>
        <taxon>Bovidae</taxon>
        <taxon>Bovinae</taxon>
        <taxon>Bos</taxon>
    </lineage>
</organism>
<gene>
    <name type="primary">DYNLRB2</name>
    <name type="synonym">DNLC2B</name>
</gene>
<proteinExistence type="inferred from homology"/>
<feature type="initiator methionine" description="Removed" evidence="2">
    <location>
        <position position="1"/>
    </location>
</feature>
<feature type="chain" id="PRO_0000273562" description="Dynein light chain roadblock-type 2">
    <location>
        <begin position="2"/>
        <end position="96"/>
    </location>
</feature>
<feature type="modified residue" description="N-acetylalanine" evidence="2">
    <location>
        <position position="2"/>
    </location>
</feature>
<name>DLRB2_BOVIN</name>
<protein>
    <recommendedName>
        <fullName>Dynein light chain roadblock-type 2</fullName>
    </recommendedName>
    <alternativeName>
        <fullName>Dynein light chain 2B, cytoplasmic</fullName>
    </alternativeName>
</protein>